<dbReference type="EMBL" id="CP001056">
    <property type="protein sequence ID" value="ACD22321.1"/>
    <property type="molecule type" value="Genomic_DNA"/>
</dbReference>
<dbReference type="SMR" id="B2TP92"/>
<dbReference type="KEGG" id="cbk:CLL_A2862"/>
<dbReference type="PATRIC" id="fig|935198.13.peg.2823"/>
<dbReference type="HOGENOM" id="CLU_135754_1_0_9"/>
<dbReference type="Proteomes" id="UP000001195">
    <property type="component" value="Chromosome"/>
</dbReference>
<dbReference type="GO" id="GO:0005524">
    <property type="term" value="F:ATP binding"/>
    <property type="evidence" value="ECO:0007669"/>
    <property type="project" value="UniProtKB-UniRule"/>
</dbReference>
<dbReference type="GO" id="GO:0046933">
    <property type="term" value="F:proton-transporting ATP synthase activity, rotational mechanism"/>
    <property type="evidence" value="ECO:0007669"/>
    <property type="project" value="UniProtKB-UniRule"/>
</dbReference>
<dbReference type="GO" id="GO:0046961">
    <property type="term" value="F:proton-transporting ATPase activity, rotational mechanism"/>
    <property type="evidence" value="ECO:0007669"/>
    <property type="project" value="InterPro"/>
</dbReference>
<dbReference type="GO" id="GO:0042777">
    <property type="term" value="P:proton motive force-driven plasma membrane ATP synthesis"/>
    <property type="evidence" value="ECO:0007669"/>
    <property type="project" value="UniProtKB-UniRule"/>
</dbReference>
<dbReference type="Gene3D" id="3.40.50.10580">
    <property type="entry name" value="ATPase, V1 complex, subunit F"/>
    <property type="match status" value="1"/>
</dbReference>
<dbReference type="HAMAP" id="MF_00312">
    <property type="entry name" value="ATP_synth_F_arch"/>
    <property type="match status" value="1"/>
</dbReference>
<dbReference type="InterPro" id="IPR008218">
    <property type="entry name" value="ATPase_V1-cplx_f_g_su"/>
</dbReference>
<dbReference type="InterPro" id="IPR022944">
    <property type="entry name" value="ATPase_V1-cplx_fsu_bac/arc"/>
</dbReference>
<dbReference type="InterPro" id="IPR036906">
    <property type="entry name" value="ATPase_V1_fsu_sf"/>
</dbReference>
<dbReference type="NCBIfam" id="NF002384">
    <property type="entry name" value="PRK01395.1"/>
    <property type="match status" value="1"/>
</dbReference>
<dbReference type="Pfam" id="PF01990">
    <property type="entry name" value="ATP-synt_F"/>
    <property type="match status" value="1"/>
</dbReference>
<dbReference type="SUPFAM" id="SSF159468">
    <property type="entry name" value="AtpF-like"/>
    <property type="match status" value="1"/>
</dbReference>
<name>VATF_CLOBB</name>
<comment type="function">
    <text evidence="1">Produces ATP from ADP in the presence of a proton gradient across the membrane.</text>
</comment>
<comment type="similarity">
    <text evidence="1">Belongs to the V-ATPase F subunit family.</text>
</comment>
<sequence>MFKKIGVVGDKDSVLAFKALGIDVFPVVGNEEAKKTVDKLAKNDYAVVFVTEHVAQGIEETIERYNKEVLPAVILIPSNQGTLNIGMQRISDNVEKAVGVNIL</sequence>
<protein>
    <recommendedName>
        <fullName evidence="1">V-type ATP synthase subunit F</fullName>
    </recommendedName>
    <alternativeName>
        <fullName evidence="1">V-ATPase subunit F</fullName>
    </alternativeName>
</protein>
<accession>B2TP92</accession>
<reference key="1">
    <citation type="submission" date="2008-04" db="EMBL/GenBank/DDBJ databases">
        <title>Complete sequence of Clostridium botulinum strain Eklund.</title>
        <authorList>
            <person name="Brinkac L.M."/>
            <person name="Brown J.L."/>
            <person name="Bruce D."/>
            <person name="Detter C."/>
            <person name="Munk C."/>
            <person name="Smith L.A."/>
            <person name="Smith T.J."/>
            <person name="Sutton G."/>
            <person name="Brettin T.S."/>
        </authorList>
    </citation>
    <scope>NUCLEOTIDE SEQUENCE [LARGE SCALE GENOMIC DNA]</scope>
    <source>
        <strain>Eklund 17B / Type B</strain>
    </source>
</reference>
<proteinExistence type="inferred from homology"/>
<keyword id="KW-0066">ATP synthesis</keyword>
<keyword id="KW-0375">Hydrogen ion transport</keyword>
<keyword id="KW-0406">Ion transport</keyword>
<keyword id="KW-0813">Transport</keyword>
<feature type="chain" id="PRO_1000115686" description="V-type ATP synthase subunit F">
    <location>
        <begin position="1"/>
        <end position="103"/>
    </location>
</feature>
<gene>
    <name evidence="1" type="primary">atpF</name>
    <name type="ordered locus">CLL_A2862</name>
</gene>
<organism>
    <name type="scientific">Clostridium botulinum (strain Eklund 17B / Type B)</name>
    <dbReference type="NCBI Taxonomy" id="935198"/>
    <lineage>
        <taxon>Bacteria</taxon>
        <taxon>Bacillati</taxon>
        <taxon>Bacillota</taxon>
        <taxon>Clostridia</taxon>
        <taxon>Eubacteriales</taxon>
        <taxon>Clostridiaceae</taxon>
        <taxon>Clostridium</taxon>
    </lineage>
</organism>
<evidence type="ECO:0000255" key="1">
    <source>
        <dbReference type="HAMAP-Rule" id="MF_00312"/>
    </source>
</evidence>